<reference key="1">
    <citation type="journal article" date="1997" name="Nature">
        <title>The complete genome sequence of the hyperthermophilic, sulphate-reducing archaeon Archaeoglobus fulgidus.</title>
        <authorList>
            <person name="Klenk H.-P."/>
            <person name="Clayton R.A."/>
            <person name="Tomb J.-F."/>
            <person name="White O."/>
            <person name="Nelson K.E."/>
            <person name="Ketchum K.A."/>
            <person name="Dodson R.J."/>
            <person name="Gwinn M.L."/>
            <person name="Hickey E.K."/>
            <person name="Peterson J.D."/>
            <person name="Richardson D.L."/>
            <person name="Kerlavage A.R."/>
            <person name="Graham D.E."/>
            <person name="Kyrpides N.C."/>
            <person name="Fleischmann R.D."/>
            <person name="Quackenbush J."/>
            <person name="Lee N.H."/>
            <person name="Sutton G.G."/>
            <person name="Gill S.R."/>
            <person name="Kirkness E.F."/>
            <person name="Dougherty B.A."/>
            <person name="McKenney K."/>
            <person name="Adams M.D."/>
            <person name="Loftus B.J."/>
            <person name="Peterson S.N."/>
            <person name="Reich C.I."/>
            <person name="McNeil L.K."/>
            <person name="Badger J.H."/>
            <person name="Glodek A."/>
            <person name="Zhou L."/>
            <person name="Overbeek R."/>
            <person name="Gocayne J.D."/>
            <person name="Weidman J.F."/>
            <person name="McDonald L.A."/>
            <person name="Utterback T.R."/>
            <person name="Cotton M.D."/>
            <person name="Spriggs T."/>
            <person name="Artiach P."/>
            <person name="Kaine B.P."/>
            <person name="Sykes S.M."/>
            <person name="Sadow P.W."/>
            <person name="D'Andrea K.P."/>
            <person name="Bowman C."/>
            <person name="Fujii C."/>
            <person name="Garland S.A."/>
            <person name="Mason T.M."/>
            <person name="Olsen G.J."/>
            <person name="Fraser C.M."/>
            <person name="Smith H.O."/>
            <person name="Woese C.R."/>
            <person name="Venter J.C."/>
        </authorList>
    </citation>
    <scope>NUCLEOTIDE SEQUENCE [LARGE SCALE GENOMIC DNA]</scope>
    <source>
        <strain>ATCC 49558 / DSM 4304 / JCM 9628 / NBRC 100126 / VC-16</strain>
    </source>
</reference>
<proteinExistence type="inferred from homology"/>
<comment type="subunit">
    <text evidence="2">Homohexamer.</text>
</comment>
<comment type="similarity">
    <text evidence="3">Belongs to the GTP cyclohydrolase I type 2/NIF3 family.</text>
</comment>
<evidence type="ECO:0000250" key="1">
    <source>
        <dbReference type="UniProtKB" id="P0AFP6"/>
    </source>
</evidence>
<evidence type="ECO:0000250" key="2">
    <source>
        <dbReference type="UniProtKB" id="Q58337"/>
    </source>
</evidence>
<evidence type="ECO:0000305" key="3"/>
<feature type="chain" id="PRO_0000147346" description="GTP cyclohydrolase 1 type 2 homolog">
    <location>
        <begin position="1"/>
        <end position="245"/>
    </location>
</feature>
<feature type="binding site" evidence="1">
    <location>
        <position position="63"/>
    </location>
    <ligand>
        <name>a divalent metal cation</name>
        <dbReference type="ChEBI" id="CHEBI:60240"/>
        <label>1</label>
    </ligand>
</feature>
<feature type="binding site" evidence="1">
    <location>
        <position position="64"/>
    </location>
    <ligand>
        <name>a divalent metal cation</name>
        <dbReference type="ChEBI" id="CHEBI:60240"/>
        <label>2</label>
    </ligand>
</feature>
<feature type="binding site" evidence="1">
    <location>
        <position position="100"/>
    </location>
    <ligand>
        <name>a divalent metal cation</name>
        <dbReference type="ChEBI" id="CHEBI:60240"/>
        <label>1</label>
    </ligand>
</feature>
<feature type="binding site" evidence="1">
    <location>
        <position position="213"/>
    </location>
    <ligand>
        <name>a divalent metal cation</name>
        <dbReference type="ChEBI" id="CHEBI:60240"/>
        <label>2</label>
    </ligand>
</feature>
<feature type="binding site" evidence="1">
    <location>
        <position position="217"/>
    </location>
    <ligand>
        <name>a divalent metal cation</name>
        <dbReference type="ChEBI" id="CHEBI:60240"/>
        <label>1</label>
    </ligand>
</feature>
<feature type="binding site" evidence="1">
    <location>
        <position position="217"/>
    </location>
    <ligand>
        <name>a divalent metal cation</name>
        <dbReference type="ChEBI" id="CHEBI:60240"/>
        <label>2</label>
    </ligand>
</feature>
<protein>
    <recommendedName>
        <fullName>GTP cyclohydrolase 1 type 2 homolog</fullName>
    </recommendedName>
</protein>
<keyword id="KW-0479">Metal-binding</keyword>
<keyword id="KW-1185">Reference proteome</keyword>
<gene>
    <name type="ordered locus">AF_1777</name>
</gene>
<dbReference type="EMBL" id="AE000782">
    <property type="protein sequence ID" value="AAB89474.1"/>
    <property type="molecule type" value="Genomic_DNA"/>
</dbReference>
<dbReference type="PIR" id="H69471">
    <property type="entry name" value="H69471"/>
</dbReference>
<dbReference type="RefSeq" id="WP_010879273.1">
    <property type="nucleotide sequence ID" value="NC_000917.1"/>
</dbReference>
<dbReference type="SMR" id="O28497"/>
<dbReference type="STRING" id="224325.AF_1777"/>
<dbReference type="PaxDb" id="224325-AF_1777"/>
<dbReference type="EnsemblBacteria" id="AAB89474">
    <property type="protein sequence ID" value="AAB89474"/>
    <property type="gene ID" value="AF_1777"/>
</dbReference>
<dbReference type="KEGG" id="afu:AF_1777"/>
<dbReference type="eggNOG" id="arCOG04454">
    <property type="taxonomic scope" value="Archaea"/>
</dbReference>
<dbReference type="HOGENOM" id="CLU_037423_3_0_2"/>
<dbReference type="OrthoDB" id="85198at2157"/>
<dbReference type="PhylomeDB" id="O28497"/>
<dbReference type="Proteomes" id="UP000002199">
    <property type="component" value="Chromosome"/>
</dbReference>
<dbReference type="GO" id="GO:0005737">
    <property type="term" value="C:cytoplasm"/>
    <property type="evidence" value="ECO:0007669"/>
    <property type="project" value="TreeGrafter"/>
</dbReference>
<dbReference type="GO" id="GO:0046872">
    <property type="term" value="F:metal ion binding"/>
    <property type="evidence" value="ECO:0007669"/>
    <property type="project" value="UniProtKB-KW"/>
</dbReference>
<dbReference type="FunFam" id="3.40.1390.30:FF:000001">
    <property type="entry name" value="GTP cyclohydrolase 1 type 2"/>
    <property type="match status" value="1"/>
</dbReference>
<dbReference type="Gene3D" id="3.40.1390.30">
    <property type="entry name" value="NIF3 (NGG1p interacting factor 3)-like"/>
    <property type="match status" value="2"/>
</dbReference>
<dbReference type="InterPro" id="IPR002678">
    <property type="entry name" value="DUF34/NIF3"/>
</dbReference>
<dbReference type="InterPro" id="IPR036069">
    <property type="entry name" value="DUF34/NIF3_sf"/>
</dbReference>
<dbReference type="NCBIfam" id="TIGR00486">
    <property type="entry name" value="YbgI_SA1388"/>
    <property type="match status" value="1"/>
</dbReference>
<dbReference type="PANTHER" id="PTHR13799:SF14">
    <property type="entry name" value="GTP CYCLOHYDROLASE 1 TYPE 2 HOMOLOG"/>
    <property type="match status" value="1"/>
</dbReference>
<dbReference type="PANTHER" id="PTHR13799">
    <property type="entry name" value="NGG1 INTERACTING FACTOR 3"/>
    <property type="match status" value="1"/>
</dbReference>
<dbReference type="Pfam" id="PF01784">
    <property type="entry name" value="DUF34_NIF3"/>
    <property type="match status" value="1"/>
</dbReference>
<dbReference type="SUPFAM" id="SSF102705">
    <property type="entry name" value="NIF3 (NGG1p interacting factor 3)-like"/>
    <property type="match status" value="1"/>
</dbReference>
<name>GCH1L_ARCFU</name>
<sequence length="245" mass="26860">MNLAEVVRFLDDFLEINSYQDVSNNGLQVEGSEEVKKVAFAVDASMESFRAAKAVNADMLVVHHGLIWGGIGYIRGIVKRRIEFLLRSNLSLYAAHLPLDAHREVGNNAVILRKIGAEPQEEFGEYKGVKIGFSAKLEKATAVGEIAEKLGPAMVLPFGEERVRKVAAVSGKGCFALNEAIDAGVELFITGEPEHEAYHLAKEGGINVFFLGHYESEKFGVQSLMEVVREKLGIEAVFLDIPTNL</sequence>
<accession>O28497</accession>
<organism>
    <name type="scientific">Archaeoglobus fulgidus (strain ATCC 49558 / DSM 4304 / JCM 9628 / NBRC 100126 / VC-16)</name>
    <dbReference type="NCBI Taxonomy" id="224325"/>
    <lineage>
        <taxon>Archaea</taxon>
        <taxon>Methanobacteriati</taxon>
        <taxon>Methanobacteriota</taxon>
        <taxon>Archaeoglobi</taxon>
        <taxon>Archaeoglobales</taxon>
        <taxon>Archaeoglobaceae</taxon>
        <taxon>Archaeoglobus</taxon>
    </lineage>
</organism>